<keyword id="KW-0687">Ribonucleoprotein</keyword>
<keyword id="KW-0689">Ribosomal protein</keyword>
<keyword id="KW-0694">RNA-binding</keyword>
<keyword id="KW-0699">rRNA-binding</keyword>
<protein>
    <recommendedName>
        <fullName evidence="1">Large ribosomal subunit protein bL21</fullName>
    </recommendedName>
    <alternativeName>
        <fullName evidence="2">50S ribosomal protein L21</fullName>
    </alternativeName>
</protein>
<proteinExistence type="inferred from homology"/>
<dbReference type="EMBL" id="CP000076">
    <property type="protein sequence ID" value="AAY94539.2"/>
    <property type="status" value="ALT_INIT"/>
    <property type="molecule type" value="Genomic_DNA"/>
</dbReference>
<dbReference type="RefSeq" id="WP_003228361.1">
    <property type="nucleotide sequence ID" value="NC_004129.6"/>
</dbReference>
<dbReference type="SMR" id="Q4K5T6"/>
<dbReference type="STRING" id="220664.PFL_5329"/>
<dbReference type="GeneID" id="93491194"/>
<dbReference type="KEGG" id="pfl:PFL_5329"/>
<dbReference type="eggNOG" id="COG0261">
    <property type="taxonomic scope" value="Bacteria"/>
</dbReference>
<dbReference type="HOGENOM" id="CLU_061463_3_1_6"/>
<dbReference type="Proteomes" id="UP000008540">
    <property type="component" value="Chromosome"/>
</dbReference>
<dbReference type="GO" id="GO:0005737">
    <property type="term" value="C:cytoplasm"/>
    <property type="evidence" value="ECO:0007669"/>
    <property type="project" value="UniProtKB-ARBA"/>
</dbReference>
<dbReference type="GO" id="GO:1990904">
    <property type="term" value="C:ribonucleoprotein complex"/>
    <property type="evidence" value="ECO:0007669"/>
    <property type="project" value="UniProtKB-KW"/>
</dbReference>
<dbReference type="GO" id="GO:0005840">
    <property type="term" value="C:ribosome"/>
    <property type="evidence" value="ECO:0007669"/>
    <property type="project" value="UniProtKB-KW"/>
</dbReference>
<dbReference type="GO" id="GO:0019843">
    <property type="term" value="F:rRNA binding"/>
    <property type="evidence" value="ECO:0007669"/>
    <property type="project" value="UniProtKB-UniRule"/>
</dbReference>
<dbReference type="GO" id="GO:0003735">
    <property type="term" value="F:structural constituent of ribosome"/>
    <property type="evidence" value="ECO:0007669"/>
    <property type="project" value="InterPro"/>
</dbReference>
<dbReference type="GO" id="GO:0006412">
    <property type="term" value="P:translation"/>
    <property type="evidence" value="ECO:0007669"/>
    <property type="project" value="UniProtKB-UniRule"/>
</dbReference>
<dbReference type="HAMAP" id="MF_01363">
    <property type="entry name" value="Ribosomal_bL21"/>
    <property type="match status" value="1"/>
</dbReference>
<dbReference type="InterPro" id="IPR028909">
    <property type="entry name" value="bL21-like"/>
</dbReference>
<dbReference type="InterPro" id="IPR036164">
    <property type="entry name" value="bL21-like_sf"/>
</dbReference>
<dbReference type="InterPro" id="IPR001787">
    <property type="entry name" value="Ribosomal_bL21"/>
</dbReference>
<dbReference type="InterPro" id="IPR018258">
    <property type="entry name" value="Ribosomal_bL21_CS"/>
</dbReference>
<dbReference type="NCBIfam" id="TIGR00061">
    <property type="entry name" value="L21"/>
    <property type="match status" value="1"/>
</dbReference>
<dbReference type="PANTHER" id="PTHR21349">
    <property type="entry name" value="50S RIBOSOMAL PROTEIN L21"/>
    <property type="match status" value="1"/>
</dbReference>
<dbReference type="PANTHER" id="PTHR21349:SF0">
    <property type="entry name" value="LARGE RIBOSOMAL SUBUNIT PROTEIN BL21M"/>
    <property type="match status" value="1"/>
</dbReference>
<dbReference type="Pfam" id="PF00829">
    <property type="entry name" value="Ribosomal_L21p"/>
    <property type="match status" value="1"/>
</dbReference>
<dbReference type="SUPFAM" id="SSF141091">
    <property type="entry name" value="L21p-like"/>
    <property type="match status" value="1"/>
</dbReference>
<dbReference type="PROSITE" id="PS01169">
    <property type="entry name" value="RIBOSOMAL_L21"/>
    <property type="match status" value="1"/>
</dbReference>
<sequence length="103" mass="11561">MYAVIVTGGKQYKVAEGEYLKIEKLEVATGESVTFDRVLLVANGDDVNIGAPVVAGATVKAEVISQGRHDKVRIIKFRRRKHHMKRMGHRQWFTEIKITGIQA</sequence>
<name>RL21_PSEF5</name>
<organism>
    <name type="scientific">Pseudomonas fluorescens (strain ATCC BAA-477 / NRRL B-23932 / Pf-5)</name>
    <dbReference type="NCBI Taxonomy" id="220664"/>
    <lineage>
        <taxon>Bacteria</taxon>
        <taxon>Pseudomonadati</taxon>
        <taxon>Pseudomonadota</taxon>
        <taxon>Gammaproteobacteria</taxon>
        <taxon>Pseudomonadales</taxon>
        <taxon>Pseudomonadaceae</taxon>
        <taxon>Pseudomonas</taxon>
    </lineage>
</organism>
<evidence type="ECO:0000255" key="1">
    <source>
        <dbReference type="HAMAP-Rule" id="MF_01363"/>
    </source>
</evidence>
<evidence type="ECO:0000305" key="2"/>
<gene>
    <name evidence="1" type="primary">rplU</name>
    <name type="ordered locus">PFL_5329</name>
</gene>
<feature type="chain" id="PRO_0000270709" description="Large ribosomal subunit protein bL21">
    <location>
        <begin position="1"/>
        <end position="103"/>
    </location>
</feature>
<accession>Q4K5T6</accession>
<reference key="1">
    <citation type="journal article" date="2005" name="Nat. Biotechnol.">
        <title>Complete genome sequence of the plant commensal Pseudomonas fluorescens Pf-5.</title>
        <authorList>
            <person name="Paulsen I.T."/>
            <person name="Press C.M."/>
            <person name="Ravel J."/>
            <person name="Kobayashi D.Y."/>
            <person name="Myers G.S.A."/>
            <person name="Mavrodi D.V."/>
            <person name="DeBoy R.T."/>
            <person name="Seshadri R."/>
            <person name="Ren Q."/>
            <person name="Madupu R."/>
            <person name="Dodson R.J."/>
            <person name="Durkin A.S."/>
            <person name="Brinkac L.M."/>
            <person name="Daugherty S.C."/>
            <person name="Sullivan S.A."/>
            <person name="Rosovitz M.J."/>
            <person name="Gwinn M.L."/>
            <person name="Zhou L."/>
            <person name="Schneider D.J."/>
            <person name="Cartinhour S.W."/>
            <person name="Nelson W.C."/>
            <person name="Weidman J."/>
            <person name="Watkins K."/>
            <person name="Tran K."/>
            <person name="Khouri H."/>
            <person name="Pierson E.A."/>
            <person name="Pierson L.S. III"/>
            <person name="Thomashow L.S."/>
            <person name="Loper J.E."/>
        </authorList>
    </citation>
    <scope>NUCLEOTIDE SEQUENCE [LARGE SCALE GENOMIC DNA]</scope>
    <source>
        <strain>ATCC BAA-477 / NRRL B-23932 / Pf-5</strain>
    </source>
</reference>
<comment type="function">
    <text evidence="1">This protein binds to 23S rRNA in the presence of protein L20.</text>
</comment>
<comment type="subunit">
    <text evidence="1">Part of the 50S ribosomal subunit. Contacts protein L20.</text>
</comment>
<comment type="similarity">
    <text evidence="1">Belongs to the bacterial ribosomal protein bL21 family.</text>
</comment>
<comment type="sequence caution" evidence="2">
    <conflict type="erroneous initiation">
        <sequence resource="EMBL-CDS" id="AAY94539"/>
    </conflict>
    <text>Extended N-terminus.</text>
</comment>